<sequence>MTNSNRIKLTWISFLSYALTGALVIVTGMVMGNIADYFNLPVSSMSNTFTFLNAGILISIFLNAWLMEIVPLKTQLRFGFLLMVLAVAGLMFSHSLALFSAAMFILGVVSGITMSIGTFLVTQMYEGRQRGSRLLFTDSFFSMAGMIFPMIAAFLLARSIEWYWVYACIGLVYVAIFILTFGCEFPALGKHAPKTDAPVEKEKWGIGVLFLSVAALCYILGQLGFISWVPEYAKGLGMSLNDAGTLVSNFWMSYMVGMWAFSFILRFFDLQRILTVLAGLAAILMYVFNTGTPAHMAWSILALGFFSSAIYTTIITLGSQQTKVPSPKLVNFVLTCGTIGTMLTFVVTGPIVEHSGPQAALLTANGLYAVVFVMCFLLGFVSRHRQHNTLTSH</sequence>
<accession>B7M1R7</accession>
<organism>
    <name type="scientific">Escherichia coli O8 (strain IAI1)</name>
    <dbReference type="NCBI Taxonomy" id="585034"/>
    <lineage>
        <taxon>Bacteria</taxon>
        <taxon>Pseudomonadati</taxon>
        <taxon>Pseudomonadota</taxon>
        <taxon>Gammaproteobacteria</taxon>
        <taxon>Enterobacterales</taxon>
        <taxon>Enterobacteriaceae</taxon>
        <taxon>Escherichia</taxon>
    </lineage>
</organism>
<feature type="chain" id="PRO_1000136139" description="Protein TsgA">
    <location>
        <begin position="1"/>
        <end position="393"/>
    </location>
</feature>
<feature type="transmembrane region" description="Helical" evidence="1">
    <location>
        <begin position="11"/>
        <end position="31"/>
    </location>
</feature>
<feature type="transmembrane region" description="Helical" evidence="1">
    <location>
        <begin position="51"/>
        <end position="71"/>
    </location>
</feature>
<feature type="transmembrane region" description="Helical" evidence="1">
    <location>
        <begin position="78"/>
        <end position="98"/>
    </location>
</feature>
<feature type="transmembrane region" description="Helical" evidence="1">
    <location>
        <begin position="101"/>
        <end position="121"/>
    </location>
</feature>
<feature type="transmembrane region" description="Helical" evidence="1">
    <location>
        <begin position="134"/>
        <end position="154"/>
    </location>
</feature>
<feature type="transmembrane region" description="Helical" evidence="1">
    <location>
        <begin position="162"/>
        <end position="182"/>
    </location>
</feature>
<feature type="transmembrane region" description="Helical" evidence="1">
    <location>
        <begin position="206"/>
        <end position="226"/>
    </location>
</feature>
<feature type="transmembrane region" description="Helical" evidence="1">
    <location>
        <begin position="245"/>
        <end position="265"/>
    </location>
</feature>
<feature type="transmembrane region" description="Helical" evidence="1">
    <location>
        <begin position="273"/>
        <end position="293"/>
    </location>
</feature>
<feature type="transmembrane region" description="Helical" evidence="1">
    <location>
        <begin position="297"/>
        <end position="317"/>
    </location>
</feature>
<feature type="transmembrane region" description="Helical" evidence="1">
    <location>
        <begin position="332"/>
        <end position="352"/>
    </location>
</feature>
<feature type="transmembrane region" description="Helical" evidence="1">
    <location>
        <begin position="361"/>
        <end position="381"/>
    </location>
</feature>
<name>TSGA_ECO8A</name>
<reference key="1">
    <citation type="journal article" date="2009" name="PLoS Genet.">
        <title>Organised genome dynamics in the Escherichia coli species results in highly diverse adaptive paths.</title>
        <authorList>
            <person name="Touchon M."/>
            <person name="Hoede C."/>
            <person name="Tenaillon O."/>
            <person name="Barbe V."/>
            <person name="Baeriswyl S."/>
            <person name="Bidet P."/>
            <person name="Bingen E."/>
            <person name="Bonacorsi S."/>
            <person name="Bouchier C."/>
            <person name="Bouvet O."/>
            <person name="Calteau A."/>
            <person name="Chiapello H."/>
            <person name="Clermont O."/>
            <person name="Cruveiller S."/>
            <person name="Danchin A."/>
            <person name="Diard M."/>
            <person name="Dossat C."/>
            <person name="Karoui M.E."/>
            <person name="Frapy E."/>
            <person name="Garry L."/>
            <person name="Ghigo J.M."/>
            <person name="Gilles A.M."/>
            <person name="Johnson J."/>
            <person name="Le Bouguenec C."/>
            <person name="Lescat M."/>
            <person name="Mangenot S."/>
            <person name="Martinez-Jehanne V."/>
            <person name="Matic I."/>
            <person name="Nassif X."/>
            <person name="Oztas S."/>
            <person name="Petit M.A."/>
            <person name="Pichon C."/>
            <person name="Rouy Z."/>
            <person name="Ruf C.S."/>
            <person name="Schneider D."/>
            <person name="Tourret J."/>
            <person name="Vacherie B."/>
            <person name="Vallenet D."/>
            <person name="Medigue C."/>
            <person name="Rocha E.P.C."/>
            <person name="Denamur E."/>
        </authorList>
    </citation>
    <scope>NUCLEOTIDE SEQUENCE [LARGE SCALE GENOMIC DNA]</scope>
    <source>
        <strain>IAI1</strain>
    </source>
</reference>
<gene>
    <name evidence="1" type="primary">tsgA</name>
    <name type="ordered locus">ECIAI1_3503</name>
</gene>
<proteinExistence type="inferred from homology"/>
<dbReference type="EMBL" id="CU928160">
    <property type="protein sequence ID" value="CAR00304.1"/>
    <property type="molecule type" value="Genomic_DNA"/>
</dbReference>
<dbReference type="RefSeq" id="WP_000185247.1">
    <property type="nucleotide sequence ID" value="NC_011741.1"/>
</dbReference>
<dbReference type="SMR" id="B7M1R7"/>
<dbReference type="GeneID" id="75206308"/>
<dbReference type="KEGG" id="ecr:ECIAI1_3503"/>
<dbReference type="HOGENOM" id="CLU_056916_0_0_6"/>
<dbReference type="GO" id="GO:0005886">
    <property type="term" value="C:plasma membrane"/>
    <property type="evidence" value="ECO:0007669"/>
    <property type="project" value="UniProtKB-SubCell"/>
</dbReference>
<dbReference type="GO" id="GO:0022857">
    <property type="term" value="F:transmembrane transporter activity"/>
    <property type="evidence" value="ECO:0007669"/>
    <property type="project" value="InterPro"/>
</dbReference>
<dbReference type="CDD" id="cd17333">
    <property type="entry name" value="MFS_FucP_MFSD4_like"/>
    <property type="match status" value="1"/>
</dbReference>
<dbReference type="FunFam" id="1.20.1250.20:FF:000032">
    <property type="entry name" value="Protein TsgA"/>
    <property type="match status" value="1"/>
</dbReference>
<dbReference type="FunFam" id="1.20.1250.20:FF:000052">
    <property type="entry name" value="Protein TsgA"/>
    <property type="match status" value="1"/>
</dbReference>
<dbReference type="Gene3D" id="1.20.1250.20">
    <property type="entry name" value="MFS general substrate transporter like domains"/>
    <property type="match status" value="2"/>
</dbReference>
<dbReference type="HAMAP" id="MF_01044">
    <property type="entry name" value="MFS_TsgA"/>
    <property type="match status" value="1"/>
</dbReference>
<dbReference type="InterPro" id="IPR011701">
    <property type="entry name" value="MFS"/>
</dbReference>
<dbReference type="InterPro" id="IPR020846">
    <property type="entry name" value="MFS_dom"/>
</dbReference>
<dbReference type="InterPro" id="IPR036259">
    <property type="entry name" value="MFS_trans_sf"/>
</dbReference>
<dbReference type="InterPro" id="IPR023528">
    <property type="entry name" value="MFS_TsgA"/>
</dbReference>
<dbReference type="InterPro" id="IPR050375">
    <property type="entry name" value="MFS_TsgA-like"/>
</dbReference>
<dbReference type="NCBIfam" id="NF002982">
    <property type="entry name" value="PRK03699.1"/>
    <property type="match status" value="1"/>
</dbReference>
<dbReference type="PANTHER" id="PTHR43702">
    <property type="entry name" value="L-FUCOSE-PROTON SYMPORTER"/>
    <property type="match status" value="1"/>
</dbReference>
<dbReference type="PANTHER" id="PTHR43702:SF3">
    <property type="entry name" value="PROTEIN TSGA"/>
    <property type="match status" value="1"/>
</dbReference>
<dbReference type="Pfam" id="PF07690">
    <property type="entry name" value="MFS_1"/>
    <property type="match status" value="1"/>
</dbReference>
<dbReference type="SUPFAM" id="SSF103473">
    <property type="entry name" value="MFS general substrate transporter"/>
    <property type="match status" value="1"/>
</dbReference>
<dbReference type="PROSITE" id="PS50850">
    <property type="entry name" value="MFS"/>
    <property type="match status" value="1"/>
</dbReference>
<comment type="subcellular location">
    <subcellularLocation>
        <location evidence="1">Cell inner membrane</location>
        <topology evidence="1">Multi-pass membrane protein</topology>
    </subcellularLocation>
</comment>
<comment type="similarity">
    <text evidence="1">Belongs to the major facilitator superfamily. TsgA family.</text>
</comment>
<keyword id="KW-0997">Cell inner membrane</keyword>
<keyword id="KW-1003">Cell membrane</keyword>
<keyword id="KW-0472">Membrane</keyword>
<keyword id="KW-0812">Transmembrane</keyword>
<keyword id="KW-1133">Transmembrane helix</keyword>
<protein>
    <recommendedName>
        <fullName evidence="1">Protein TsgA</fullName>
    </recommendedName>
</protein>
<evidence type="ECO:0000255" key="1">
    <source>
        <dbReference type="HAMAP-Rule" id="MF_01044"/>
    </source>
</evidence>